<evidence type="ECO:0000250" key="1"/>
<evidence type="ECO:0000305" key="2"/>
<feature type="chain" id="PRO_0000151953" description="ATP phosphoribosyltransferase">
    <location>
        <begin position="1"/>
        <end position="306"/>
    </location>
</feature>
<comment type="function">
    <text evidence="1">Catalyzes the condensation of ATP and 5-phosphoribose 1-diphosphate to form N'-(5'-phosphoribosyl)-ATP (PR-ATP). Has a crucial role in the pathway because the rate of histidine biosynthesis seems to be controlled primarily by regulation of the enzymatic activity (By similarity).</text>
</comment>
<comment type="catalytic activity">
    <reaction>
        <text>1-(5-phospho-beta-D-ribosyl)-ATP + diphosphate = 5-phospho-alpha-D-ribose 1-diphosphate + ATP</text>
        <dbReference type="Rhea" id="RHEA:18473"/>
        <dbReference type="ChEBI" id="CHEBI:30616"/>
        <dbReference type="ChEBI" id="CHEBI:33019"/>
        <dbReference type="ChEBI" id="CHEBI:58017"/>
        <dbReference type="ChEBI" id="CHEBI:73183"/>
        <dbReference type="EC" id="2.4.2.17"/>
    </reaction>
</comment>
<comment type="pathway">
    <text>Amino-acid biosynthesis; L-histidine biosynthesis; L-histidine from 5-phospho-alpha-D-ribose 1-diphosphate: step 1/9.</text>
</comment>
<comment type="subcellular location">
    <subcellularLocation>
        <location evidence="1">Cytoplasm</location>
    </subcellularLocation>
</comment>
<comment type="similarity">
    <text evidence="2">Belongs to the ATP phosphoribosyltransferase family.</text>
</comment>
<organism>
    <name type="scientific">Candida glabrata (strain ATCC 2001 / BCRC 20586 / JCM 3761 / NBRC 0622 / NRRL Y-65 / CBS 138)</name>
    <name type="common">Yeast</name>
    <name type="synonym">Nakaseomyces glabratus</name>
    <dbReference type="NCBI Taxonomy" id="284593"/>
    <lineage>
        <taxon>Eukaryota</taxon>
        <taxon>Fungi</taxon>
        <taxon>Dikarya</taxon>
        <taxon>Ascomycota</taxon>
        <taxon>Saccharomycotina</taxon>
        <taxon>Saccharomycetes</taxon>
        <taxon>Saccharomycetales</taxon>
        <taxon>Saccharomycetaceae</taxon>
        <taxon>Nakaseomyces</taxon>
    </lineage>
</organism>
<proteinExistence type="inferred from homology"/>
<gene>
    <name type="primary">HIS1</name>
    <name type="ordered locus">CAGL0L00759g</name>
</gene>
<sequence length="306" mass="33943">MDFVNHLNDRLLFAVPKKGRLYEKTKQLLNGSDIKFNRSNRLDIALCTTLPIALIFLPAADIPTFVGEGKCDLGITGLDQVKESGIEEIDLLMDLGFGGCKLQVQVPEKDRKYTDPKQLVGKTIVSSFVKLSRDYFQQLEEEVLGKPVDKLSTKIKYVGGSVEASCALGVGDAIVDLVESGETMRAAGLIDIATVLETSAYLIQARRPQQDKSREELIEVIKSRIQGVLTAQRYVCCSYNTPEGNLKELLKVTPGRRAPTISKLDDDGWVAVNSMIERKRKADIMDELKRKGASDIMVFEISNCRV</sequence>
<keyword id="KW-0028">Amino-acid biosynthesis</keyword>
<keyword id="KW-0067">ATP-binding</keyword>
<keyword id="KW-0963">Cytoplasm</keyword>
<keyword id="KW-0328">Glycosyltransferase</keyword>
<keyword id="KW-0368">Histidine biosynthesis</keyword>
<keyword id="KW-0547">Nucleotide-binding</keyword>
<keyword id="KW-1185">Reference proteome</keyword>
<keyword id="KW-0808">Transferase</keyword>
<accession>Q6FLT7</accession>
<reference key="1">
    <citation type="journal article" date="2004" name="Nature">
        <title>Genome evolution in yeasts.</title>
        <authorList>
            <person name="Dujon B."/>
            <person name="Sherman D."/>
            <person name="Fischer G."/>
            <person name="Durrens P."/>
            <person name="Casaregola S."/>
            <person name="Lafontaine I."/>
            <person name="de Montigny J."/>
            <person name="Marck C."/>
            <person name="Neuveglise C."/>
            <person name="Talla E."/>
            <person name="Goffard N."/>
            <person name="Frangeul L."/>
            <person name="Aigle M."/>
            <person name="Anthouard V."/>
            <person name="Babour A."/>
            <person name="Barbe V."/>
            <person name="Barnay S."/>
            <person name="Blanchin S."/>
            <person name="Beckerich J.-M."/>
            <person name="Beyne E."/>
            <person name="Bleykasten C."/>
            <person name="Boisrame A."/>
            <person name="Boyer J."/>
            <person name="Cattolico L."/>
            <person name="Confanioleri F."/>
            <person name="de Daruvar A."/>
            <person name="Despons L."/>
            <person name="Fabre E."/>
            <person name="Fairhead C."/>
            <person name="Ferry-Dumazet H."/>
            <person name="Groppi A."/>
            <person name="Hantraye F."/>
            <person name="Hennequin C."/>
            <person name="Jauniaux N."/>
            <person name="Joyet P."/>
            <person name="Kachouri R."/>
            <person name="Kerrest A."/>
            <person name="Koszul R."/>
            <person name="Lemaire M."/>
            <person name="Lesur I."/>
            <person name="Ma L."/>
            <person name="Muller H."/>
            <person name="Nicaud J.-M."/>
            <person name="Nikolski M."/>
            <person name="Oztas S."/>
            <person name="Ozier-Kalogeropoulos O."/>
            <person name="Pellenz S."/>
            <person name="Potier S."/>
            <person name="Richard G.-F."/>
            <person name="Straub M.-L."/>
            <person name="Suleau A."/>
            <person name="Swennen D."/>
            <person name="Tekaia F."/>
            <person name="Wesolowski-Louvel M."/>
            <person name="Westhof E."/>
            <person name="Wirth B."/>
            <person name="Zeniou-Meyer M."/>
            <person name="Zivanovic Y."/>
            <person name="Bolotin-Fukuhara M."/>
            <person name="Thierry A."/>
            <person name="Bouchier C."/>
            <person name="Caudron B."/>
            <person name="Scarpelli C."/>
            <person name="Gaillardin C."/>
            <person name="Weissenbach J."/>
            <person name="Wincker P."/>
            <person name="Souciet J.-L."/>
        </authorList>
    </citation>
    <scope>NUCLEOTIDE SEQUENCE [LARGE SCALE GENOMIC DNA]</scope>
    <source>
        <strain>ATCC 2001 / BCRC 20586 / JCM 3761 / NBRC 0622 / NRRL Y-65 / CBS 138</strain>
    </source>
</reference>
<dbReference type="EC" id="2.4.2.17"/>
<dbReference type="EMBL" id="CR380958">
    <property type="protein sequence ID" value="CAG61777.1"/>
    <property type="molecule type" value="Genomic_DNA"/>
</dbReference>
<dbReference type="RefSeq" id="XP_448807.1">
    <property type="nucleotide sequence ID" value="XM_448807.1"/>
</dbReference>
<dbReference type="SMR" id="Q6FLT7"/>
<dbReference type="FunCoup" id="Q6FLT7">
    <property type="interactions" value="225"/>
</dbReference>
<dbReference type="STRING" id="284593.Q6FLT7"/>
<dbReference type="EnsemblFungi" id="CAGL0L00759g-T">
    <property type="protein sequence ID" value="CAGL0L00759g-T-p1"/>
    <property type="gene ID" value="CAGL0L00759g"/>
</dbReference>
<dbReference type="GeneID" id="2890929"/>
<dbReference type="KEGG" id="cgr:2890929"/>
<dbReference type="CGD" id="CAL0135092">
    <property type="gene designation" value="HIS1"/>
</dbReference>
<dbReference type="VEuPathDB" id="FungiDB:B1J91_L00759g"/>
<dbReference type="VEuPathDB" id="FungiDB:CAGL0L00759g"/>
<dbReference type="eggNOG" id="KOG2831">
    <property type="taxonomic scope" value="Eukaryota"/>
</dbReference>
<dbReference type="HOGENOM" id="CLU_038115_1_2_1"/>
<dbReference type="InParanoid" id="Q6FLT7"/>
<dbReference type="OMA" id="YVMMDYD"/>
<dbReference type="UniPathway" id="UPA00031">
    <property type="reaction ID" value="UER00006"/>
</dbReference>
<dbReference type="Proteomes" id="UP000002428">
    <property type="component" value="Chromosome L"/>
</dbReference>
<dbReference type="GO" id="GO:0005737">
    <property type="term" value="C:cytoplasm"/>
    <property type="evidence" value="ECO:0007669"/>
    <property type="project" value="UniProtKB-SubCell"/>
</dbReference>
<dbReference type="GO" id="GO:0005524">
    <property type="term" value="F:ATP binding"/>
    <property type="evidence" value="ECO:0007669"/>
    <property type="project" value="UniProtKB-KW"/>
</dbReference>
<dbReference type="GO" id="GO:0003879">
    <property type="term" value="F:ATP phosphoribosyltransferase activity"/>
    <property type="evidence" value="ECO:0007669"/>
    <property type="project" value="UniProtKB-EC"/>
</dbReference>
<dbReference type="GO" id="GO:0000287">
    <property type="term" value="F:magnesium ion binding"/>
    <property type="evidence" value="ECO:0007669"/>
    <property type="project" value="InterPro"/>
</dbReference>
<dbReference type="GO" id="GO:0000105">
    <property type="term" value="P:L-histidine biosynthetic process"/>
    <property type="evidence" value="ECO:0007669"/>
    <property type="project" value="UniProtKB-UniPathway"/>
</dbReference>
<dbReference type="FunFam" id="3.30.70.120:FF:000003">
    <property type="entry name" value="ATP phosphoribosyltransferase"/>
    <property type="match status" value="1"/>
</dbReference>
<dbReference type="FunFam" id="3.40.190.10:FF:000123">
    <property type="entry name" value="HIS1p ATP phosphoribosyltransferase"/>
    <property type="match status" value="1"/>
</dbReference>
<dbReference type="Gene3D" id="3.30.70.120">
    <property type="match status" value="1"/>
</dbReference>
<dbReference type="Gene3D" id="3.40.190.10">
    <property type="entry name" value="Periplasmic binding protein-like II"/>
    <property type="match status" value="2"/>
</dbReference>
<dbReference type="HAMAP" id="MF_00079">
    <property type="entry name" value="HisG_Long"/>
    <property type="match status" value="1"/>
</dbReference>
<dbReference type="InterPro" id="IPR020621">
    <property type="entry name" value="ATP-PRT_HisG_long"/>
</dbReference>
<dbReference type="InterPro" id="IPR013820">
    <property type="entry name" value="ATP_PRibTrfase_cat"/>
</dbReference>
<dbReference type="InterPro" id="IPR018198">
    <property type="entry name" value="ATP_PRibTrfase_CS"/>
</dbReference>
<dbReference type="InterPro" id="IPR001348">
    <property type="entry name" value="ATP_PRibTrfase_HisG"/>
</dbReference>
<dbReference type="InterPro" id="IPR013115">
    <property type="entry name" value="HisG_C"/>
</dbReference>
<dbReference type="InterPro" id="IPR011322">
    <property type="entry name" value="N-reg_PII-like_a/b"/>
</dbReference>
<dbReference type="InterPro" id="IPR015867">
    <property type="entry name" value="N-reg_PII/ATP_PRibTrfase_C"/>
</dbReference>
<dbReference type="NCBIfam" id="TIGR00070">
    <property type="entry name" value="hisG"/>
    <property type="match status" value="1"/>
</dbReference>
<dbReference type="NCBIfam" id="TIGR03455">
    <property type="entry name" value="HisG_C-term"/>
    <property type="match status" value="1"/>
</dbReference>
<dbReference type="PANTHER" id="PTHR21403:SF8">
    <property type="entry name" value="ATP PHOSPHORIBOSYLTRANSFERASE"/>
    <property type="match status" value="1"/>
</dbReference>
<dbReference type="PANTHER" id="PTHR21403">
    <property type="entry name" value="ATP PHOSPHORIBOSYLTRANSFERASE ATP-PRTASE"/>
    <property type="match status" value="1"/>
</dbReference>
<dbReference type="Pfam" id="PF01634">
    <property type="entry name" value="HisG"/>
    <property type="match status" value="1"/>
</dbReference>
<dbReference type="Pfam" id="PF08029">
    <property type="entry name" value="HisG_C"/>
    <property type="match status" value="1"/>
</dbReference>
<dbReference type="SUPFAM" id="SSF54913">
    <property type="entry name" value="GlnB-like"/>
    <property type="match status" value="1"/>
</dbReference>
<dbReference type="SUPFAM" id="SSF53850">
    <property type="entry name" value="Periplasmic binding protein-like II"/>
    <property type="match status" value="1"/>
</dbReference>
<dbReference type="PROSITE" id="PS01316">
    <property type="entry name" value="ATP_P_PHORIBOSYLTR"/>
    <property type="match status" value="1"/>
</dbReference>
<protein>
    <recommendedName>
        <fullName>ATP phosphoribosyltransferase</fullName>
        <shortName>ATP-PRT</shortName>
        <shortName>ATP-PRTase</shortName>
        <ecNumber>2.4.2.17</ecNumber>
    </recommendedName>
</protein>
<name>HIS1_CANGA</name>